<dbReference type="EC" id="2.7.7.23" evidence="1"/>
<dbReference type="EC" id="2.3.1.157" evidence="1"/>
<dbReference type="EMBL" id="AL157959">
    <property type="protein sequence ID" value="CAM07590.1"/>
    <property type="molecule type" value="Genomic_DNA"/>
</dbReference>
<dbReference type="PIR" id="G82023">
    <property type="entry name" value="G82023"/>
</dbReference>
<dbReference type="RefSeq" id="WP_002247105.1">
    <property type="nucleotide sequence ID" value="NC_003116.1"/>
</dbReference>
<dbReference type="SMR" id="Q9JWN3"/>
<dbReference type="EnsemblBacteria" id="CAM07590">
    <property type="protein sequence ID" value="CAM07590"/>
    <property type="gene ID" value="NMA0284"/>
</dbReference>
<dbReference type="KEGG" id="nma:NMA0284"/>
<dbReference type="HOGENOM" id="CLU_029499_15_2_4"/>
<dbReference type="UniPathway" id="UPA00113">
    <property type="reaction ID" value="UER00532"/>
</dbReference>
<dbReference type="UniPathway" id="UPA00113">
    <property type="reaction ID" value="UER00533"/>
</dbReference>
<dbReference type="UniPathway" id="UPA00973"/>
<dbReference type="Proteomes" id="UP000000626">
    <property type="component" value="Chromosome"/>
</dbReference>
<dbReference type="GO" id="GO:0005737">
    <property type="term" value="C:cytoplasm"/>
    <property type="evidence" value="ECO:0007669"/>
    <property type="project" value="UniProtKB-SubCell"/>
</dbReference>
<dbReference type="GO" id="GO:0016020">
    <property type="term" value="C:membrane"/>
    <property type="evidence" value="ECO:0007669"/>
    <property type="project" value="GOC"/>
</dbReference>
<dbReference type="GO" id="GO:0019134">
    <property type="term" value="F:glucosamine-1-phosphate N-acetyltransferase activity"/>
    <property type="evidence" value="ECO:0007669"/>
    <property type="project" value="UniProtKB-UniRule"/>
</dbReference>
<dbReference type="GO" id="GO:0000287">
    <property type="term" value="F:magnesium ion binding"/>
    <property type="evidence" value="ECO:0007669"/>
    <property type="project" value="UniProtKB-UniRule"/>
</dbReference>
<dbReference type="GO" id="GO:0003977">
    <property type="term" value="F:UDP-N-acetylglucosamine diphosphorylase activity"/>
    <property type="evidence" value="ECO:0007669"/>
    <property type="project" value="UniProtKB-UniRule"/>
</dbReference>
<dbReference type="GO" id="GO:0000902">
    <property type="term" value="P:cell morphogenesis"/>
    <property type="evidence" value="ECO:0007669"/>
    <property type="project" value="UniProtKB-UniRule"/>
</dbReference>
<dbReference type="GO" id="GO:0071555">
    <property type="term" value="P:cell wall organization"/>
    <property type="evidence" value="ECO:0007669"/>
    <property type="project" value="UniProtKB-KW"/>
</dbReference>
<dbReference type="GO" id="GO:0009245">
    <property type="term" value="P:lipid A biosynthetic process"/>
    <property type="evidence" value="ECO:0007669"/>
    <property type="project" value="UniProtKB-UniRule"/>
</dbReference>
<dbReference type="GO" id="GO:0009252">
    <property type="term" value="P:peptidoglycan biosynthetic process"/>
    <property type="evidence" value="ECO:0007669"/>
    <property type="project" value="UniProtKB-UniRule"/>
</dbReference>
<dbReference type="GO" id="GO:0008360">
    <property type="term" value="P:regulation of cell shape"/>
    <property type="evidence" value="ECO:0007669"/>
    <property type="project" value="UniProtKB-KW"/>
</dbReference>
<dbReference type="GO" id="GO:0006048">
    <property type="term" value="P:UDP-N-acetylglucosamine biosynthetic process"/>
    <property type="evidence" value="ECO:0007669"/>
    <property type="project" value="UniProtKB-UniPathway"/>
</dbReference>
<dbReference type="CDD" id="cd02540">
    <property type="entry name" value="GT2_GlmU_N_bac"/>
    <property type="match status" value="1"/>
</dbReference>
<dbReference type="CDD" id="cd03353">
    <property type="entry name" value="LbH_GlmU_C"/>
    <property type="match status" value="1"/>
</dbReference>
<dbReference type="Gene3D" id="2.160.10.10">
    <property type="entry name" value="Hexapeptide repeat proteins"/>
    <property type="match status" value="1"/>
</dbReference>
<dbReference type="Gene3D" id="3.90.550.10">
    <property type="entry name" value="Spore Coat Polysaccharide Biosynthesis Protein SpsA, Chain A"/>
    <property type="match status" value="1"/>
</dbReference>
<dbReference type="HAMAP" id="MF_01631">
    <property type="entry name" value="GlmU"/>
    <property type="match status" value="1"/>
</dbReference>
<dbReference type="InterPro" id="IPR005882">
    <property type="entry name" value="Bifunctional_GlmU"/>
</dbReference>
<dbReference type="InterPro" id="IPR050065">
    <property type="entry name" value="GlmU-like"/>
</dbReference>
<dbReference type="InterPro" id="IPR038009">
    <property type="entry name" value="GlmU_C_LbH"/>
</dbReference>
<dbReference type="InterPro" id="IPR001451">
    <property type="entry name" value="Hexapep"/>
</dbReference>
<dbReference type="InterPro" id="IPR025877">
    <property type="entry name" value="MobA-like_NTP_Trfase"/>
</dbReference>
<dbReference type="InterPro" id="IPR029044">
    <property type="entry name" value="Nucleotide-diphossugar_trans"/>
</dbReference>
<dbReference type="InterPro" id="IPR011004">
    <property type="entry name" value="Trimer_LpxA-like_sf"/>
</dbReference>
<dbReference type="NCBIfam" id="TIGR01173">
    <property type="entry name" value="glmU"/>
    <property type="match status" value="1"/>
</dbReference>
<dbReference type="PANTHER" id="PTHR43584:SF3">
    <property type="entry name" value="BIFUNCTIONAL PROTEIN GLMU"/>
    <property type="match status" value="1"/>
</dbReference>
<dbReference type="PANTHER" id="PTHR43584">
    <property type="entry name" value="NUCLEOTIDYL TRANSFERASE"/>
    <property type="match status" value="1"/>
</dbReference>
<dbReference type="Pfam" id="PF00132">
    <property type="entry name" value="Hexapep"/>
    <property type="match status" value="3"/>
</dbReference>
<dbReference type="Pfam" id="PF12804">
    <property type="entry name" value="NTP_transf_3"/>
    <property type="match status" value="1"/>
</dbReference>
<dbReference type="SUPFAM" id="SSF53448">
    <property type="entry name" value="Nucleotide-diphospho-sugar transferases"/>
    <property type="match status" value="1"/>
</dbReference>
<dbReference type="SUPFAM" id="SSF51161">
    <property type="entry name" value="Trimeric LpxA-like enzymes"/>
    <property type="match status" value="1"/>
</dbReference>
<keyword id="KW-0012">Acyltransferase</keyword>
<keyword id="KW-0133">Cell shape</keyword>
<keyword id="KW-0961">Cell wall biogenesis/degradation</keyword>
<keyword id="KW-0963">Cytoplasm</keyword>
<keyword id="KW-0460">Magnesium</keyword>
<keyword id="KW-0479">Metal-binding</keyword>
<keyword id="KW-0511">Multifunctional enzyme</keyword>
<keyword id="KW-0548">Nucleotidyltransferase</keyword>
<keyword id="KW-0573">Peptidoglycan synthesis</keyword>
<keyword id="KW-0677">Repeat</keyword>
<keyword id="KW-0808">Transferase</keyword>
<comment type="function">
    <text evidence="1">Catalyzes the last two sequential reactions in the de novo biosynthetic pathway for UDP-N-acetylglucosamine (UDP-GlcNAc). The C-terminal domain catalyzes the transfer of acetyl group from acetyl coenzyme A to glucosamine-1-phosphate (GlcN-1-P) to produce N-acetylglucosamine-1-phosphate (GlcNAc-1-P), which is converted into UDP-GlcNAc by the transfer of uridine 5-monophosphate (from uridine 5-triphosphate), a reaction catalyzed by the N-terminal domain.</text>
</comment>
<comment type="catalytic activity">
    <reaction evidence="1">
        <text>alpha-D-glucosamine 1-phosphate + acetyl-CoA = N-acetyl-alpha-D-glucosamine 1-phosphate + CoA + H(+)</text>
        <dbReference type="Rhea" id="RHEA:13725"/>
        <dbReference type="ChEBI" id="CHEBI:15378"/>
        <dbReference type="ChEBI" id="CHEBI:57287"/>
        <dbReference type="ChEBI" id="CHEBI:57288"/>
        <dbReference type="ChEBI" id="CHEBI:57776"/>
        <dbReference type="ChEBI" id="CHEBI:58516"/>
        <dbReference type="EC" id="2.3.1.157"/>
    </reaction>
</comment>
<comment type="catalytic activity">
    <reaction evidence="1">
        <text>N-acetyl-alpha-D-glucosamine 1-phosphate + UTP + H(+) = UDP-N-acetyl-alpha-D-glucosamine + diphosphate</text>
        <dbReference type="Rhea" id="RHEA:13509"/>
        <dbReference type="ChEBI" id="CHEBI:15378"/>
        <dbReference type="ChEBI" id="CHEBI:33019"/>
        <dbReference type="ChEBI" id="CHEBI:46398"/>
        <dbReference type="ChEBI" id="CHEBI:57705"/>
        <dbReference type="ChEBI" id="CHEBI:57776"/>
        <dbReference type="EC" id="2.7.7.23"/>
    </reaction>
</comment>
<comment type="cofactor">
    <cofactor evidence="1">
        <name>Mg(2+)</name>
        <dbReference type="ChEBI" id="CHEBI:18420"/>
    </cofactor>
    <text evidence="1">Binds 1 Mg(2+) ion per subunit.</text>
</comment>
<comment type="pathway">
    <text evidence="1">Nucleotide-sugar biosynthesis; UDP-N-acetyl-alpha-D-glucosamine biosynthesis; N-acetyl-alpha-D-glucosamine 1-phosphate from alpha-D-glucosamine 6-phosphate (route II): step 2/2.</text>
</comment>
<comment type="pathway">
    <text evidence="1">Nucleotide-sugar biosynthesis; UDP-N-acetyl-alpha-D-glucosamine biosynthesis; UDP-N-acetyl-alpha-D-glucosamine from N-acetyl-alpha-D-glucosamine 1-phosphate: step 1/1.</text>
</comment>
<comment type="pathway">
    <text evidence="1">Bacterial outer membrane biogenesis; LPS lipid A biosynthesis.</text>
</comment>
<comment type="subunit">
    <text evidence="1">Homotrimer.</text>
</comment>
<comment type="subcellular location">
    <subcellularLocation>
        <location evidence="1">Cytoplasm</location>
    </subcellularLocation>
</comment>
<comment type="similarity">
    <text evidence="1">In the N-terminal section; belongs to the N-acetylglucosamine-1-phosphate uridyltransferase family.</text>
</comment>
<comment type="similarity">
    <text evidence="1">In the C-terminal section; belongs to the transferase hexapeptide repeat family.</text>
</comment>
<evidence type="ECO:0000255" key="1">
    <source>
        <dbReference type="HAMAP-Rule" id="MF_01631"/>
    </source>
</evidence>
<feature type="chain" id="PRO_0000233804" description="Bifunctional protein GlmU">
    <location>
        <begin position="1"/>
        <end position="456"/>
    </location>
</feature>
<feature type="region of interest" description="Pyrophosphorylase" evidence="1">
    <location>
        <begin position="1"/>
        <end position="228"/>
    </location>
</feature>
<feature type="region of interest" description="Linker" evidence="1">
    <location>
        <begin position="229"/>
        <end position="249"/>
    </location>
</feature>
<feature type="region of interest" description="N-acetyltransferase" evidence="1">
    <location>
        <begin position="250"/>
        <end position="456"/>
    </location>
</feature>
<feature type="active site" description="Proton acceptor" evidence="1">
    <location>
        <position position="362"/>
    </location>
</feature>
<feature type="binding site" evidence="1">
    <location>
        <begin position="11"/>
        <end position="14"/>
    </location>
    <ligand>
        <name>UDP-N-acetyl-alpha-D-glucosamine</name>
        <dbReference type="ChEBI" id="CHEBI:57705"/>
    </ligand>
</feature>
<feature type="binding site" evidence="1">
    <location>
        <position position="25"/>
    </location>
    <ligand>
        <name>UDP-N-acetyl-alpha-D-glucosamine</name>
        <dbReference type="ChEBI" id="CHEBI:57705"/>
    </ligand>
</feature>
<feature type="binding site" evidence="1">
    <location>
        <position position="75"/>
    </location>
    <ligand>
        <name>UDP-N-acetyl-alpha-D-glucosamine</name>
        <dbReference type="ChEBI" id="CHEBI:57705"/>
    </ligand>
</feature>
<feature type="binding site" evidence="1">
    <location>
        <begin position="80"/>
        <end position="81"/>
    </location>
    <ligand>
        <name>UDP-N-acetyl-alpha-D-glucosamine</name>
        <dbReference type="ChEBI" id="CHEBI:57705"/>
    </ligand>
</feature>
<feature type="binding site" evidence="1">
    <location>
        <begin position="102"/>
        <end position="104"/>
    </location>
    <ligand>
        <name>UDP-N-acetyl-alpha-D-glucosamine</name>
        <dbReference type="ChEBI" id="CHEBI:57705"/>
    </ligand>
</feature>
<feature type="binding site" evidence="1">
    <location>
        <position position="104"/>
    </location>
    <ligand>
        <name>Mg(2+)</name>
        <dbReference type="ChEBI" id="CHEBI:18420"/>
    </ligand>
</feature>
<feature type="binding site" evidence="1">
    <location>
        <position position="138"/>
    </location>
    <ligand>
        <name>UDP-N-acetyl-alpha-D-glucosamine</name>
        <dbReference type="ChEBI" id="CHEBI:57705"/>
    </ligand>
</feature>
<feature type="binding site" evidence="1">
    <location>
        <position position="153"/>
    </location>
    <ligand>
        <name>UDP-N-acetyl-alpha-D-glucosamine</name>
        <dbReference type="ChEBI" id="CHEBI:57705"/>
    </ligand>
</feature>
<feature type="binding site" evidence="1">
    <location>
        <position position="168"/>
    </location>
    <ligand>
        <name>UDP-N-acetyl-alpha-D-glucosamine</name>
        <dbReference type="ChEBI" id="CHEBI:57705"/>
    </ligand>
</feature>
<feature type="binding site" evidence="1">
    <location>
        <position position="226"/>
    </location>
    <ligand>
        <name>Mg(2+)</name>
        <dbReference type="ChEBI" id="CHEBI:18420"/>
    </ligand>
</feature>
<feature type="binding site" evidence="1">
    <location>
        <position position="226"/>
    </location>
    <ligand>
        <name>UDP-N-acetyl-alpha-D-glucosamine</name>
        <dbReference type="ChEBI" id="CHEBI:57705"/>
    </ligand>
</feature>
<feature type="binding site" evidence="1">
    <location>
        <position position="332"/>
    </location>
    <ligand>
        <name>UDP-N-acetyl-alpha-D-glucosamine</name>
        <dbReference type="ChEBI" id="CHEBI:57705"/>
    </ligand>
</feature>
<feature type="binding site" evidence="1">
    <location>
        <position position="350"/>
    </location>
    <ligand>
        <name>UDP-N-acetyl-alpha-D-glucosamine</name>
        <dbReference type="ChEBI" id="CHEBI:57705"/>
    </ligand>
</feature>
<feature type="binding site" evidence="1">
    <location>
        <position position="365"/>
    </location>
    <ligand>
        <name>UDP-N-acetyl-alpha-D-glucosamine</name>
        <dbReference type="ChEBI" id="CHEBI:57705"/>
    </ligand>
</feature>
<feature type="binding site" evidence="1">
    <location>
        <position position="376"/>
    </location>
    <ligand>
        <name>UDP-N-acetyl-alpha-D-glucosamine</name>
        <dbReference type="ChEBI" id="CHEBI:57705"/>
    </ligand>
</feature>
<feature type="binding site" evidence="1">
    <location>
        <position position="379"/>
    </location>
    <ligand>
        <name>acetyl-CoA</name>
        <dbReference type="ChEBI" id="CHEBI:57288"/>
    </ligand>
</feature>
<feature type="binding site" evidence="1">
    <location>
        <begin position="385"/>
        <end position="386"/>
    </location>
    <ligand>
        <name>acetyl-CoA</name>
        <dbReference type="ChEBI" id="CHEBI:57288"/>
    </ligand>
</feature>
<feature type="binding site" evidence="1">
    <location>
        <position position="404"/>
    </location>
    <ligand>
        <name>acetyl-CoA</name>
        <dbReference type="ChEBI" id="CHEBI:57288"/>
    </ligand>
</feature>
<feature type="binding site" evidence="1">
    <location>
        <position position="422"/>
    </location>
    <ligand>
        <name>acetyl-CoA</name>
        <dbReference type="ChEBI" id="CHEBI:57288"/>
    </ligand>
</feature>
<feature type="binding site" evidence="1">
    <location>
        <position position="439"/>
    </location>
    <ligand>
        <name>acetyl-CoA</name>
        <dbReference type="ChEBI" id="CHEBI:57288"/>
    </ligand>
</feature>
<gene>
    <name evidence="1" type="primary">glmU</name>
    <name type="ordered locus">NMA0284</name>
</gene>
<name>GLMU_NEIMA</name>
<organism>
    <name type="scientific">Neisseria meningitidis serogroup A / serotype 4A (strain DSM 15465 / Z2491)</name>
    <dbReference type="NCBI Taxonomy" id="122587"/>
    <lineage>
        <taxon>Bacteria</taxon>
        <taxon>Pseudomonadati</taxon>
        <taxon>Pseudomonadota</taxon>
        <taxon>Betaproteobacteria</taxon>
        <taxon>Neisseriales</taxon>
        <taxon>Neisseriaceae</taxon>
        <taxon>Neisseria</taxon>
    </lineage>
</organism>
<proteinExistence type="inferred from homology"/>
<sequence length="456" mass="48732">MPQNTLNIVILAAGKGTRMYSKMPKVLHEIGGETMLGRVIDTAAALNPQNICVVVGHGKEQVLDTVKRDVVWVEQTEQLGTGHAVKTALPHLAAEGRTLVLYGDVPLIDVETLETLLEAAGNEVGLLTDVPADPSGLGRIIRDSSGSVTAIVEEKDADAAQKAVKEINTGILVLPNAKLEAWLNSLSSNNAQGEYYLTDLIAKAVADGIKIHPVQVRSSHLAAGVNNKLQLAELERIFQTEQAQELLKAGVTLRDPARFDLRGRLKHGQDVVIDVNCIFEGKIELGDNVEIGANCVIKNAKIGANSKIAPFSHLEGCEVGENNQIGPYARLRPQAKLADDVHVGNFVEIKNAAIGKGTKANHLTYIGDAEVGSKTNFGAGTIIANYDGVHKHKTVIGDEVRIGSNCVLVSPVKIGNKVTTGAGSTITRNVEDGKLALARSRQTIIDGWVRPEKNKQ</sequence>
<protein>
    <recommendedName>
        <fullName evidence="1">Bifunctional protein GlmU</fullName>
    </recommendedName>
    <domain>
        <recommendedName>
            <fullName evidence="1">UDP-N-acetylglucosamine pyrophosphorylase</fullName>
            <ecNumber evidence="1">2.7.7.23</ecNumber>
        </recommendedName>
        <alternativeName>
            <fullName evidence="1">N-acetylglucosamine-1-phosphate uridyltransferase</fullName>
        </alternativeName>
    </domain>
    <domain>
        <recommendedName>
            <fullName evidence="1">Glucosamine-1-phosphate N-acetyltransferase</fullName>
            <ecNumber evidence="1">2.3.1.157</ecNumber>
        </recommendedName>
    </domain>
</protein>
<accession>Q9JWN3</accession>
<accession>A1IPC7</accession>
<reference key="1">
    <citation type="journal article" date="2000" name="Nature">
        <title>Complete DNA sequence of a serogroup A strain of Neisseria meningitidis Z2491.</title>
        <authorList>
            <person name="Parkhill J."/>
            <person name="Achtman M."/>
            <person name="James K.D."/>
            <person name="Bentley S.D."/>
            <person name="Churcher C.M."/>
            <person name="Klee S.R."/>
            <person name="Morelli G."/>
            <person name="Basham D."/>
            <person name="Brown D."/>
            <person name="Chillingworth T."/>
            <person name="Davies R.M."/>
            <person name="Davis P."/>
            <person name="Devlin K."/>
            <person name="Feltwell T."/>
            <person name="Hamlin N."/>
            <person name="Holroyd S."/>
            <person name="Jagels K."/>
            <person name="Leather S."/>
            <person name="Moule S."/>
            <person name="Mungall K.L."/>
            <person name="Quail M.A."/>
            <person name="Rajandream M.A."/>
            <person name="Rutherford K.M."/>
            <person name="Simmonds M."/>
            <person name="Skelton J."/>
            <person name="Whitehead S."/>
            <person name="Spratt B.G."/>
            <person name="Barrell B.G."/>
        </authorList>
    </citation>
    <scope>NUCLEOTIDE SEQUENCE [LARGE SCALE GENOMIC DNA]</scope>
    <source>
        <strain>DSM 15465 / Z2491</strain>
    </source>
</reference>